<proteinExistence type="inferred from homology"/>
<organism>
    <name type="scientific">Albidiferax ferrireducens (strain ATCC BAA-621 / DSM 15236 / T118)</name>
    <name type="common">Rhodoferax ferrireducens</name>
    <dbReference type="NCBI Taxonomy" id="338969"/>
    <lineage>
        <taxon>Bacteria</taxon>
        <taxon>Pseudomonadati</taxon>
        <taxon>Pseudomonadota</taxon>
        <taxon>Betaproteobacteria</taxon>
        <taxon>Burkholderiales</taxon>
        <taxon>Comamonadaceae</taxon>
        <taxon>Rhodoferax</taxon>
    </lineage>
</organism>
<sequence>MKTAQEIRVGNVIMYGKDPMVVLRTEYSRGGRNSSTVRMKLKSLIANFNTEVVYKADDKLEQVILDKKECTYSYFAEPMYICMDTEYNQYEVEAENMGDSLNYLEDGMELEVVFYNEKAISVEMPTNVVREITWTEPAVKGDTSGKVLKPAKISTGFDVGVPIFVAQGDKVEIDTRTGEYRKRV</sequence>
<protein>
    <recommendedName>
        <fullName evidence="1">Elongation factor P</fullName>
        <shortName evidence="1">EF-P</shortName>
    </recommendedName>
</protein>
<name>EFP_ALBFT</name>
<comment type="function">
    <text evidence="1">Involved in peptide bond synthesis. Stimulates efficient translation and peptide-bond synthesis on native or reconstituted 70S ribosomes in vitro. Probably functions indirectly by altering the affinity of the ribosome for aminoacyl-tRNA, thus increasing their reactivity as acceptors for peptidyl transferase.</text>
</comment>
<comment type="pathway">
    <text evidence="1">Protein biosynthesis; polypeptide chain elongation.</text>
</comment>
<comment type="subcellular location">
    <subcellularLocation>
        <location evidence="1">Cytoplasm</location>
    </subcellularLocation>
</comment>
<comment type="similarity">
    <text evidence="1">Belongs to the elongation factor P family.</text>
</comment>
<keyword id="KW-0963">Cytoplasm</keyword>
<keyword id="KW-0251">Elongation factor</keyword>
<keyword id="KW-0648">Protein biosynthesis</keyword>
<keyword id="KW-1185">Reference proteome</keyword>
<gene>
    <name evidence="1" type="primary">efp</name>
    <name type="ordered locus">Rfer_2242</name>
</gene>
<feature type="chain" id="PRO_1000010828" description="Elongation factor P">
    <location>
        <begin position="1"/>
        <end position="184"/>
    </location>
</feature>
<accession>Q21W89</accession>
<reference key="1">
    <citation type="submission" date="2006-02" db="EMBL/GenBank/DDBJ databases">
        <title>Complete sequence of chromosome of Rhodoferax ferrireducens DSM 15236.</title>
        <authorList>
            <person name="Copeland A."/>
            <person name="Lucas S."/>
            <person name="Lapidus A."/>
            <person name="Barry K."/>
            <person name="Detter J.C."/>
            <person name="Glavina del Rio T."/>
            <person name="Hammon N."/>
            <person name="Israni S."/>
            <person name="Pitluck S."/>
            <person name="Brettin T."/>
            <person name="Bruce D."/>
            <person name="Han C."/>
            <person name="Tapia R."/>
            <person name="Gilna P."/>
            <person name="Kiss H."/>
            <person name="Schmutz J."/>
            <person name="Larimer F."/>
            <person name="Land M."/>
            <person name="Kyrpides N."/>
            <person name="Ivanova N."/>
            <person name="Richardson P."/>
        </authorList>
    </citation>
    <scope>NUCLEOTIDE SEQUENCE [LARGE SCALE GENOMIC DNA]</scope>
    <source>
        <strain>ATCC BAA-621 / DSM 15236 / T118</strain>
    </source>
</reference>
<evidence type="ECO:0000255" key="1">
    <source>
        <dbReference type="HAMAP-Rule" id="MF_00141"/>
    </source>
</evidence>
<dbReference type="EMBL" id="CP000267">
    <property type="protein sequence ID" value="ABD69964.1"/>
    <property type="molecule type" value="Genomic_DNA"/>
</dbReference>
<dbReference type="RefSeq" id="WP_011464532.1">
    <property type="nucleotide sequence ID" value="NC_007908.1"/>
</dbReference>
<dbReference type="SMR" id="Q21W89"/>
<dbReference type="STRING" id="338969.Rfer_2242"/>
<dbReference type="KEGG" id="rfr:Rfer_2242"/>
<dbReference type="eggNOG" id="COG0231">
    <property type="taxonomic scope" value="Bacteria"/>
</dbReference>
<dbReference type="HOGENOM" id="CLU_074944_2_1_4"/>
<dbReference type="OrthoDB" id="9801844at2"/>
<dbReference type="UniPathway" id="UPA00345"/>
<dbReference type="Proteomes" id="UP000008332">
    <property type="component" value="Chromosome"/>
</dbReference>
<dbReference type="GO" id="GO:0005737">
    <property type="term" value="C:cytoplasm"/>
    <property type="evidence" value="ECO:0007669"/>
    <property type="project" value="UniProtKB-SubCell"/>
</dbReference>
<dbReference type="GO" id="GO:0003746">
    <property type="term" value="F:translation elongation factor activity"/>
    <property type="evidence" value="ECO:0007669"/>
    <property type="project" value="UniProtKB-UniRule"/>
</dbReference>
<dbReference type="GO" id="GO:0043043">
    <property type="term" value="P:peptide biosynthetic process"/>
    <property type="evidence" value="ECO:0007669"/>
    <property type="project" value="InterPro"/>
</dbReference>
<dbReference type="CDD" id="cd04470">
    <property type="entry name" value="S1_EF-P_repeat_1"/>
    <property type="match status" value="1"/>
</dbReference>
<dbReference type="CDD" id="cd05794">
    <property type="entry name" value="S1_EF-P_repeat_2"/>
    <property type="match status" value="1"/>
</dbReference>
<dbReference type="FunFam" id="2.40.50.140:FF:000004">
    <property type="entry name" value="Elongation factor P"/>
    <property type="match status" value="1"/>
</dbReference>
<dbReference type="FunFam" id="2.40.50.140:FF:000009">
    <property type="entry name" value="Elongation factor P"/>
    <property type="match status" value="1"/>
</dbReference>
<dbReference type="Gene3D" id="2.30.30.30">
    <property type="match status" value="1"/>
</dbReference>
<dbReference type="Gene3D" id="2.40.50.140">
    <property type="entry name" value="Nucleic acid-binding proteins"/>
    <property type="match status" value="2"/>
</dbReference>
<dbReference type="HAMAP" id="MF_00141">
    <property type="entry name" value="EF_P"/>
    <property type="match status" value="1"/>
</dbReference>
<dbReference type="InterPro" id="IPR015365">
    <property type="entry name" value="Elong-fact-P_C"/>
</dbReference>
<dbReference type="InterPro" id="IPR012340">
    <property type="entry name" value="NA-bd_OB-fold"/>
</dbReference>
<dbReference type="InterPro" id="IPR014722">
    <property type="entry name" value="Rib_uL2_dom2"/>
</dbReference>
<dbReference type="InterPro" id="IPR020599">
    <property type="entry name" value="Transl_elong_fac_P/YeiP"/>
</dbReference>
<dbReference type="InterPro" id="IPR013185">
    <property type="entry name" value="Transl_elong_KOW-like"/>
</dbReference>
<dbReference type="InterPro" id="IPR001059">
    <property type="entry name" value="Transl_elong_P/YeiP_cen"/>
</dbReference>
<dbReference type="InterPro" id="IPR013852">
    <property type="entry name" value="Transl_elong_P/YeiP_CS"/>
</dbReference>
<dbReference type="InterPro" id="IPR011768">
    <property type="entry name" value="Transl_elongation_fac_P"/>
</dbReference>
<dbReference type="InterPro" id="IPR008991">
    <property type="entry name" value="Translation_prot_SH3-like_sf"/>
</dbReference>
<dbReference type="NCBIfam" id="TIGR00038">
    <property type="entry name" value="efp"/>
    <property type="match status" value="1"/>
</dbReference>
<dbReference type="NCBIfam" id="NF001810">
    <property type="entry name" value="PRK00529.1"/>
    <property type="match status" value="1"/>
</dbReference>
<dbReference type="PANTHER" id="PTHR30053">
    <property type="entry name" value="ELONGATION FACTOR P"/>
    <property type="match status" value="1"/>
</dbReference>
<dbReference type="PANTHER" id="PTHR30053:SF12">
    <property type="entry name" value="ELONGATION FACTOR P (EF-P) FAMILY PROTEIN"/>
    <property type="match status" value="1"/>
</dbReference>
<dbReference type="Pfam" id="PF01132">
    <property type="entry name" value="EFP"/>
    <property type="match status" value="1"/>
</dbReference>
<dbReference type="Pfam" id="PF08207">
    <property type="entry name" value="EFP_N"/>
    <property type="match status" value="1"/>
</dbReference>
<dbReference type="Pfam" id="PF09285">
    <property type="entry name" value="Elong-fact-P_C"/>
    <property type="match status" value="1"/>
</dbReference>
<dbReference type="PIRSF" id="PIRSF005901">
    <property type="entry name" value="EF-P"/>
    <property type="match status" value="1"/>
</dbReference>
<dbReference type="SMART" id="SM01185">
    <property type="entry name" value="EFP"/>
    <property type="match status" value="1"/>
</dbReference>
<dbReference type="SMART" id="SM00841">
    <property type="entry name" value="Elong-fact-P_C"/>
    <property type="match status" value="1"/>
</dbReference>
<dbReference type="SUPFAM" id="SSF50249">
    <property type="entry name" value="Nucleic acid-binding proteins"/>
    <property type="match status" value="2"/>
</dbReference>
<dbReference type="SUPFAM" id="SSF50104">
    <property type="entry name" value="Translation proteins SH3-like domain"/>
    <property type="match status" value="1"/>
</dbReference>
<dbReference type="PROSITE" id="PS01275">
    <property type="entry name" value="EFP"/>
    <property type="match status" value="1"/>
</dbReference>